<accession>Q9ZE78</accession>
<gene>
    <name type="ordered locus">RP068</name>
</gene>
<name>Y068_RICPR</name>
<dbReference type="EMBL" id="AJ235270">
    <property type="protein sequence ID" value="CAA14539.1"/>
    <property type="molecule type" value="Genomic_DNA"/>
</dbReference>
<dbReference type="PIR" id="D71715">
    <property type="entry name" value="D71715"/>
</dbReference>
<dbReference type="RefSeq" id="NP_220462.1">
    <property type="nucleotide sequence ID" value="NC_000963.1"/>
</dbReference>
<dbReference type="RefSeq" id="WP_004599726.1">
    <property type="nucleotide sequence ID" value="NC_000963.1"/>
</dbReference>
<dbReference type="STRING" id="272947.gene:17555151"/>
<dbReference type="EnsemblBacteria" id="CAA14539">
    <property type="protein sequence ID" value="CAA14539"/>
    <property type="gene ID" value="CAA14539"/>
</dbReference>
<dbReference type="KEGG" id="rpr:RP068"/>
<dbReference type="PATRIC" id="fig|272947.5.peg.69"/>
<dbReference type="eggNOG" id="COG3203">
    <property type="taxonomic scope" value="Bacteria"/>
</dbReference>
<dbReference type="HOGENOM" id="CLU_628327_0_0_5"/>
<dbReference type="OrthoDB" id="6758483at2"/>
<dbReference type="Proteomes" id="UP000002480">
    <property type="component" value="Chromosome"/>
</dbReference>
<dbReference type="GO" id="GO:0016020">
    <property type="term" value="C:membrane"/>
    <property type="evidence" value="ECO:0007669"/>
    <property type="project" value="InterPro"/>
</dbReference>
<dbReference type="GO" id="GO:0015288">
    <property type="term" value="F:porin activity"/>
    <property type="evidence" value="ECO:0007669"/>
    <property type="project" value="InterPro"/>
</dbReference>
<dbReference type="Gene3D" id="2.40.160.10">
    <property type="entry name" value="Porin"/>
    <property type="match status" value="1"/>
</dbReference>
<dbReference type="InterPro" id="IPR033900">
    <property type="entry name" value="Gram_neg_porin_domain"/>
</dbReference>
<dbReference type="InterPro" id="IPR023614">
    <property type="entry name" value="Porin_dom_sf"/>
</dbReference>
<dbReference type="Pfam" id="PF13609">
    <property type="entry name" value="Porin_4"/>
    <property type="match status" value="1"/>
</dbReference>
<dbReference type="SUPFAM" id="SSF56935">
    <property type="entry name" value="Porins"/>
    <property type="match status" value="1"/>
</dbReference>
<evidence type="ECO:0000255" key="1"/>
<protein>
    <recommendedName>
        <fullName>Uncharacterized protein RP068</fullName>
    </recommendedName>
</protein>
<feature type="signal peptide" evidence="1">
    <location>
        <begin position="1"/>
        <end position="19"/>
    </location>
</feature>
<feature type="chain" id="PRO_0000260171" description="Uncharacterized protein RP068">
    <location>
        <begin position="20"/>
        <end position="440"/>
    </location>
</feature>
<reference key="1">
    <citation type="journal article" date="1998" name="Nature">
        <title>The genome sequence of Rickettsia prowazekii and the origin of mitochondria.</title>
        <authorList>
            <person name="Andersson S.G.E."/>
            <person name="Zomorodipour A."/>
            <person name="Andersson J.O."/>
            <person name="Sicheritz-Ponten T."/>
            <person name="Alsmark U.C.M."/>
            <person name="Podowski R.M."/>
            <person name="Naeslund A.K."/>
            <person name="Eriksson A.-S."/>
            <person name="Winkler H.H."/>
            <person name="Kurland C.G."/>
        </authorList>
    </citation>
    <scope>NUCLEOTIDE SEQUENCE [LARGE SCALE GENOMIC DNA]</scope>
    <source>
        <strain>Madrid E</strain>
    </source>
</reference>
<proteinExistence type="inferred from homology"/>
<keyword id="KW-1185">Reference proteome</keyword>
<keyword id="KW-0732">Signal</keyword>
<organism>
    <name type="scientific">Rickettsia prowazekii (strain Madrid E)</name>
    <dbReference type="NCBI Taxonomy" id="272947"/>
    <lineage>
        <taxon>Bacteria</taxon>
        <taxon>Pseudomonadati</taxon>
        <taxon>Pseudomonadota</taxon>
        <taxon>Alphaproteobacteria</taxon>
        <taxon>Rickettsiales</taxon>
        <taxon>Rickettsiaceae</taxon>
        <taxon>Rickettsieae</taxon>
        <taxon>Rickettsia</taxon>
        <taxon>typhus group</taxon>
    </lineage>
</organism>
<sequence>MKKLLLAASIVYFASACLAEEKTTPFLSNSDTKIKLEGFYLFESGYIKQNHLILFDKNVTDNRKKLGFYTEVAFAATITKTINDVIAGAKIVLQPTTKAKTAASYNGSHIFIETSYGKVELGSPVDASAKLRVTGNKVTAGTGGWYRYALLDGQYMRYNGLKPDFDTNVNFYLESYSNSFDQINEKTEKARRLNFFTPKMKGFQAGISYTPDTANTGGNKNINNLTLQSSGRNGISVSRTGIKTFALGNGETMTINQNIRDAFSAGLTYEHAISEDADLKLSMTGEYGKPARRLIHSKVDGTTKTIEVLNTYKLSNLKAYNLGAVFTYGNFSCGASYSNLGKSLTSKEYYKVGRNTYYYNGAVAYGQGPIKTSLAYLKASRYKNTVNAVSLATEYKIMPGLLPYAEISHFQAKGKPVYYPEAPSKTTRGTVGLIGTKLKF</sequence>